<dbReference type="EC" id="2.1.1.33" evidence="2"/>
<dbReference type="EMBL" id="CP000436">
    <property type="protein sequence ID" value="ABI25934.1"/>
    <property type="molecule type" value="Genomic_DNA"/>
</dbReference>
<dbReference type="SMR" id="Q0I516"/>
<dbReference type="KEGG" id="hso:HS_1666"/>
<dbReference type="eggNOG" id="COG0220">
    <property type="taxonomic scope" value="Bacteria"/>
</dbReference>
<dbReference type="HOGENOM" id="CLU_050910_0_1_6"/>
<dbReference type="UniPathway" id="UPA00989"/>
<dbReference type="GO" id="GO:0043527">
    <property type="term" value="C:tRNA methyltransferase complex"/>
    <property type="evidence" value="ECO:0007669"/>
    <property type="project" value="TreeGrafter"/>
</dbReference>
<dbReference type="GO" id="GO:0008176">
    <property type="term" value="F:tRNA (guanine(46)-N7)-methyltransferase activity"/>
    <property type="evidence" value="ECO:0007669"/>
    <property type="project" value="UniProtKB-UniRule"/>
</dbReference>
<dbReference type="FunFam" id="3.40.50.150:FF:000035">
    <property type="entry name" value="tRNA (guanine-N(7)-)-methyltransferase"/>
    <property type="match status" value="1"/>
</dbReference>
<dbReference type="Gene3D" id="3.40.50.150">
    <property type="entry name" value="Vaccinia Virus protein VP39"/>
    <property type="match status" value="1"/>
</dbReference>
<dbReference type="HAMAP" id="MF_01057">
    <property type="entry name" value="tRNA_methyltr_TrmB"/>
    <property type="match status" value="1"/>
</dbReference>
<dbReference type="InterPro" id="IPR029063">
    <property type="entry name" value="SAM-dependent_MTases_sf"/>
</dbReference>
<dbReference type="InterPro" id="IPR003358">
    <property type="entry name" value="tRNA_(Gua-N-7)_MeTrfase_Trmb"/>
</dbReference>
<dbReference type="InterPro" id="IPR055361">
    <property type="entry name" value="tRNA_methyltr_TrmB_bact"/>
</dbReference>
<dbReference type="NCBIfam" id="TIGR00091">
    <property type="entry name" value="tRNA (guanosine(46)-N7)-methyltransferase TrmB"/>
    <property type="match status" value="1"/>
</dbReference>
<dbReference type="PANTHER" id="PTHR23417">
    <property type="entry name" value="3-DEOXY-D-MANNO-OCTULOSONIC-ACID TRANSFERASE/TRNA GUANINE-N 7 - -METHYLTRANSFERASE"/>
    <property type="match status" value="1"/>
</dbReference>
<dbReference type="PANTHER" id="PTHR23417:SF14">
    <property type="entry name" value="PENTACOTRIPEPTIDE-REPEAT REGION OF PRORP DOMAIN-CONTAINING PROTEIN"/>
    <property type="match status" value="1"/>
</dbReference>
<dbReference type="Pfam" id="PF02390">
    <property type="entry name" value="Methyltransf_4"/>
    <property type="match status" value="1"/>
</dbReference>
<dbReference type="SUPFAM" id="SSF53335">
    <property type="entry name" value="S-adenosyl-L-methionine-dependent methyltransferases"/>
    <property type="match status" value="1"/>
</dbReference>
<dbReference type="PROSITE" id="PS51625">
    <property type="entry name" value="SAM_MT_TRMB"/>
    <property type="match status" value="1"/>
</dbReference>
<accession>Q0I516</accession>
<name>TRMB_HISS1</name>
<evidence type="ECO:0000250" key="1"/>
<evidence type="ECO:0000255" key="2">
    <source>
        <dbReference type="HAMAP-Rule" id="MF_01057"/>
    </source>
</evidence>
<gene>
    <name evidence="2" type="primary">trmB</name>
    <name type="ordered locus">HS_1666</name>
</gene>
<proteinExistence type="inferred from homology"/>
<organism>
    <name type="scientific">Histophilus somni (strain 129Pt)</name>
    <name type="common">Haemophilus somnus</name>
    <dbReference type="NCBI Taxonomy" id="205914"/>
    <lineage>
        <taxon>Bacteria</taxon>
        <taxon>Pseudomonadati</taxon>
        <taxon>Pseudomonadota</taxon>
        <taxon>Gammaproteobacteria</taxon>
        <taxon>Pasteurellales</taxon>
        <taxon>Pasteurellaceae</taxon>
        <taxon>Histophilus</taxon>
    </lineage>
</organism>
<comment type="function">
    <text evidence="2">Catalyzes the formation of N(7)-methylguanine at position 46 (m7G46) in tRNA.</text>
</comment>
<comment type="catalytic activity">
    <reaction evidence="2">
        <text>guanosine(46) in tRNA + S-adenosyl-L-methionine = N(7)-methylguanosine(46) in tRNA + S-adenosyl-L-homocysteine</text>
        <dbReference type="Rhea" id="RHEA:42708"/>
        <dbReference type="Rhea" id="RHEA-COMP:10188"/>
        <dbReference type="Rhea" id="RHEA-COMP:10189"/>
        <dbReference type="ChEBI" id="CHEBI:57856"/>
        <dbReference type="ChEBI" id="CHEBI:59789"/>
        <dbReference type="ChEBI" id="CHEBI:74269"/>
        <dbReference type="ChEBI" id="CHEBI:74480"/>
        <dbReference type="EC" id="2.1.1.33"/>
    </reaction>
</comment>
<comment type="pathway">
    <text evidence="2">tRNA modification; N(7)-methylguanine-tRNA biosynthesis.</text>
</comment>
<comment type="similarity">
    <text evidence="2">Belongs to the class I-like SAM-binding methyltransferase superfamily. TrmB family.</text>
</comment>
<keyword id="KW-0489">Methyltransferase</keyword>
<keyword id="KW-0949">S-adenosyl-L-methionine</keyword>
<keyword id="KW-0808">Transferase</keyword>
<keyword id="KW-0819">tRNA processing</keyword>
<protein>
    <recommendedName>
        <fullName evidence="2">tRNA (guanine-N(7)-)-methyltransferase</fullName>
        <ecNumber evidence="2">2.1.1.33</ecNumber>
    </recommendedName>
    <alternativeName>
        <fullName evidence="2">tRNA (guanine(46)-N(7))-methyltransferase</fullName>
    </alternativeName>
    <alternativeName>
        <fullName evidence="2">tRNA(m7G46)-methyltransferase</fullName>
    </alternativeName>
</protein>
<reference key="1">
    <citation type="journal article" date="2007" name="J. Bacteriol.">
        <title>Complete genome sequence of Haemophilus somnus (Histophilus somni) strain 129Pt and comparison to Haemophilus ducreyi 35000HP and Haemophilus influenzae Rd.</title>
        <authorList>
            <person name="Challacombe J.F."/>
            <person name="Duncan A.J."/>
            <person name="Brettin T.S."/>
            <person name="Bruce D."/>
            <person name="Chertkov O."/>
            <person name="Detter J.C."/>
            <person name="Han C.S."/>
            <person name="Misra M."/>
            <person name="Richardson P."/>
            <person name="Tapia R."/>
            <person name="Thayer N."/>
            <person name="Xie G."/>
            <person name="Inzana T.J."/>
        </authorList>
    </citation>
    <scope>NUCLEOTIDE SEQUENCE [LARGE SCALE GENOMIC DNA]</scope>
    <source>
        <strain>129Pt</strain>
    </source>
</reference>
<feature type="chain" id="PRO_0000288154" description="tRNA (guanine-N(7)-)-methyltransferase">
    <location>
        <begin position="1"/>
        <end position="251"/>
    </location>
</feature>
<feature type="active site" evidence="1">
    <location>
        <position position="155"/>
    </location>
</feature>
<feature type="binding site" evidence="2">
    <location>
        <position position="80"/>
    </location>
    <ligand>
        <name>S-adenosyl-L-methionine</name>
        <dbReference type="ChEBI" id="CHEBI:59789"/>
    </ligand>
</feature>
<feature type="binding site" evidence="2">
    <location>
        <position position="105"/>
    </location>
    <ligand>
        <name>S-adenosyl-L-methionine</name>
        <dbReference type="ChEBI" id="CHEBI:59789"/>
    </ligand>
</feature>
<feature type="binding site" evidence="2">
    <location>
        <position position="132"/>
    </location>
    <ligand>
        <name>S-adenosyl-L-methionine</name>
        <dbReference type="ChEBI" id="CHEBI:59789"/>
    </ligand>
</feature>
<feature type="binding site" evidence="2">
    <location>
        <position position="155"/>
    </location>
    <ligand>
        <name>S-adenosyl-L-methionine</name>
        <dbReference type="ChEBI" id="CHEBI:59789"/>
    </ligand>
</feature>
<feature type="binding site" evidence="2">
    <location>
        <position position="159"/>
    </location>
    <ligand>
        <name>substrate</name>
    </ligand>
</feature>
<feature type="binding site" evidence="2">
    <location>
        <position position="191"/>
    </location>
    <ligand>
        <name>substrate</name>
    </ligand>
</feature>
<feature type="binding site" evidence="2">
    <location>
        <begin position="228"/>
        <end position="231"/>
    </location>
    <ligand>
        <name>substrate</name>
    </ligand>
</feature>
<sequence length="251" mass="28967">MTEQKITFADQKRKTVEIAEFTEDGRYKRKVRSFVLRTGRLSEFQRNMMNNNWATLGLEYQTTAFDFTQIYGNTNPVILEIGFGMGKSLVEMALQNPDKNYLGIEVHTPGVGACIAYAVEKQVKNLRVICHDATEILQDCIADNSLAGLQLFFPDPWHKTKHHKRRIVQPHFVEKIQQKLVPNGFVHMATDWENYAEYMLEVLTSAVGLRNTSATNDYIPRPDFRPLTKFEQRGHKLGHGVWDLFFIKNIT</sequence>